<name>Y2275_LACPL</name>
<protein>
    <recommendedName>
        <fullName evidence="1">UPF0297 protein lp_2275</fullName>
    </recommendedName>
</protein>
<reference key="1">
    <citation type="journal article" date="2003" name="Proc. Natl. Acad. Sci. U.S.A.">
        <title>Complete genome sequence of Lactobacillus plantarum WCFS1.</title>
        <authorList>
            <person name="Kleerebezem M."/>
            <person name="Boekhorst J."/>
            <person name="van Kranenburg R."/>
            <person name="Molenaar D."/>
            <person name="Kuipers O.P."/>
            <person name="Leer R."/>
            <person name="Tarchini R."/>
            <person name="Peters S.A."/>
            <person name="Sandbrink H.M."/>
            <person name="Fiers M.W.E.J."/>
            <person name="Stiekema W."/>
            <person name="Klein Lankhorst R.M."/>
            <person name="Bron P.A."/>
            <person name="Hoffer S.M."/>
            <person name="Nierop Groot M.N."/>
            <person name="Kerkhoven R."/>
            <person name="De Vries M."/>
            <person name="Ursing B."/>
            <person name="De Vos W.M."/>
            <person name="Siezen R.J."/>
        </authorList>
    </citation>
    <scope>NUCLEOTIDE SEQUENCE [LARGE SCALE GENOMIC DNA]</scope>
    <source>
        <strain>ATCC BAA-793 / NCIMB 8826 / WCFS1</strain>
    </source>
</reference>
<reference key="2">
    <citation type="journal article" date="2012" name="J. Bacteriol.">
        <title>Complete resequencing and reannotation of the Lactobacillus plantarum WCFS1 genome.</title>
        <authorList>
            <person name="Siezen R.J."/>
            <person name="Francke C."/>
            <person name="Renckens B."/>
            <person name="Boekhorst J."/>
            <person name="Wels M."/>
            <person name="Kleerebezem M."/>
            <person name="van Hijum S.A."/>
        </authorList>
    </citation>
    <scope>NUCLEOTIDE SEQUENCE [LARGE SCALE GENOMIC DNA]</scope>
    <scope>GENOME REANNOTATION</scope>
    <source>
        <strain>ATCC BAA-793 / NCIMB 8826 / WCFS1</strain>
    </source>
</reference>
<comment type="similarity">
    <text evidence="1">Belongs to the UPF0297 family.</text>
</comment>
<dbReference type="EMBL" id="AL935263">
    <property type="protein sequence ID" value="CCC79483.1"/>
    <property type="molecule type" value="Genomic_DNA"/>
</dbReference>
<dbReference type="RefSeq" id="WP_003641523.1">
    <property type="nucleotide sequence ID" value="NC_004567.2"/>
</dbReference>
<dbReference type="RefSeq" id="YP_004889997.1">
    <property type="nucleotide sequence ID" value="NC_004567.2"/>
</dbReference>
<dbReference type="SMR" id="Q88V12"/>
<dbReference type="STRING" id="220668.lp_2275"/>
<dbReference type="EnsemblBacteria" id="CCC79483">
    <property type="protein sequence ID" value="CCC79483"/>
    <property type="gene ID" value="lp_2275"/>
</dbReference>
<dbReference type="KEGG" id="lpl:lp_2275"/>
<dbReference type="PATRIC" id="fig|220668.9.peg.1926"/>
<dbReference type="eggNOG" id="COG4472">
    <property type="taxonomic scope" value="Bacteria"/>
</dbReference>
<dbReference type="HOGENOM" id="CLU_162466_0_0_9"/>
<dbReference type="OrthoDB" id="9796303at2"/>
<dbReference type="PhylomeDB" id="Q88V12"/>
<dbReference type="Proteomes" id="UP000000432">
    <property type="component" value="Chromosome"/>
</dbReference>
<dbReference type="HAMAP" id="MF_01507">
    <property type="entry name" value="UPF0297"/>
    <property type="match status" value="1"/>
</dbReference>
<dbReference type="InterPro" id="IPR009309">
    <property type="entry name" value="IreB"/>
</dbReference>
<dbReference type="NCBIfam" id="NF003997">
    <property type="entry name" value="PRK05473.1"/>
    <property type="match status" value="1"/>
</dbReference>
<dbReference type="PANTHER" id="PTHR40067">
    <property type="entry name" value="UPF0297 PROTEIN YRZL"/>
    <property type="match status" value="1"/>
</dbReference>
<dbReference type="PANTHER" id="PTHR40067:SF1">
    <property type="entry name" value="UPF0297 PROTEIN YRZL"/>
    <property type="match status" value="1"/>
</dbReference>
<dbReference type="Pfam" id="PF06135">
    <property type="entry name" value="IreB"/>
    <property type="match status" value="1"/>
</dbReference>
<dbReference type="PIRSF" id="PIRSF037258">
    <property type="entry name" value="DUF965_bac"/>
    <property type="match status" value="1"/>
</dbReference>
<proteinExistence type="inferred from homology"/>
<evidence type="ECO:0000255" key="1">
    <source>
        <dbReference type="HAMAP-Rule" id="MF_01507"/>
    </source>
</evidence>
<sequence>MSSLDKTMYFDFDNDSVKDVHDTLTTVYEALQEKGYNPINQIVGYLLSGDPAYIPRLKDARNLIRKHQRDEIIEELVKSYLKADKDVDA</sequence>
<organism>
    <name type="scientific">Lactiplantibacillus plantarum (strain ATCC BAA-793 / NCIMB 8826 / WCFS1)</name>
    <name type="common">Lactobacillus plantarum</name>
    <dbReference type="NCBI Taxonomy" id="220668"/>
    <lineage>
        <taxon>Bacteria</taxon>
        <taxon>Bacillati</taxon>
        <taxon>Bacillota</taxon>
        <taxon>Bacilli</taxon>
        <taxon>Lactobacillales</taxon>
        <taxon>Lactobacillaceae</taxon>
        <taxon>Lactiplantibacillus</taxon>
    </lineage>
</organism>
<accession>Q88V12</accession>
<accession>F9UQJ4</accession>
<keyword id="KW-1185">Reference proteome</keyword>
<feature type="chain" id="PRO_0000216971" description="UPF0297 protein lp_2275">
    <location>
        <begin position="1"/>
        <end position="89"/>
    </location>
</feature>
<gene>
    <name type="ordered locus">lp_2275</name>
</gene>